<gene>
    <name type="primary">cheR</name>
    <name type="ordered locus">lin0691</name>
</gene>
<organism>
    <name type="scientific">Listeria innocua serovar 6a (strain ATCC BAA-680 / CLIP 11262)</name>
    <dbReference type="NCBI Taxonomy" id="272626"/>
    <lineage>
        <taxon>Bacteria</taxon>
        <taxon>Bacillati</taxon>
        <taxon>Bacillota</taxon>
        <taxon>Bacilli</taxon>
        <taxon>Bacillales</taxon>
        <taxon>Listeriaceae</taxon>
        <taxon>Listeria</taxon>
    </lineage>
</organism>
<accession>Q92DX0</accession>
<proteinExistence type="inferred from homology"/>
<feature type="chain" id="PRO_0000176035" description="Chemotaxis protein methyltransferase">
    <location>
        <begin position="1"/>
        <end position="262"/>
    </location>
</feature>
<feature type="domain" description="CheR-type methyltransferase" evidence="2">
    <location>
        <begin position="1"/>
        <end position="262"/>
    </location>
</feature>
<feature type="binding site" evidence="1">
    <location>
        <position position="72"/>
    </location>
    <ligand>
        <name>S-adenosyl-L-methionine</name>
        <dbReference type="ChEBI" id="CHEBI:59789"/>
    </ligand>
</feature>
<feature type="binding site" evidence="1">
    <location>
        <position position="74"/>
    </location>
    <ligand>
        <name>S-adenosyl-L-methionine</name>
        <dbReference type="ChEBI" id="CHEBI:59789"/>
    </ligand>
</feature>
<feature type="binding site" evidence="1">
    <location>
        <position position="78"/>
    </location>
    <ligand>
        <name>S-adenosyl-L-methionine</name>
        <dbReference type="ChEBI" id="CHEBI:59789"/>
    </ligand>
</feature>
<feature type="binding site" evidence="1">
    <location>
        <position position="114"/>
    </location>
    <ligand>
        <name>S-adenosyl-L-methionine</name>
        <dbReference type="ChEBI" id="CHEBI:59789"/>
    </ligand>
</feature>
<feature type="binding site" evidence="1">
    <location>
        <position position="137"/>
    </location>
    <ligand>
        <name>S-adenosyl-L-methionine</name>
        <dbReference type="ChEBI" id="CHEBI:59789"/>
    </ligand>
</feature>
<feature type="binding site" evidence="1">
    <location>
        <begin position="191"/>
        <end position="192"/>
    </location>
    <ligand>
        <name>S-adenosyl-L-methionine</name>
        <dbReference type="ChEBI" id="CHEBI:59789"/>
    </ligand>
</feature>
<feature type="binding site" evidence="1">
    <location>
        <begin position="207"/>
        <end position="208"/>
    </location>
    <ligand>
        <name>S-adenosyl-L-methionine</name>
        <dbReference type="ChEBI" id="CHEBI:59789"/>
    </ligand>
</feature>
<sequence length="262" mass="30875">MIPDLEKDYLYFTRVVKRDLGLDLTLYKETQMKRRILSFIVKKKYITFGEFFKHLKKDALLLDEFISLITINVSAFFRNRNRWDVLEKQVIPRLLEDSRGKLRVWSAACSSGEEPYSLAIMMERSVGTRHYDILATDLEPAILKRAVIGEYQSRQMEELNEQERRSAFIEKGDTYQILPEYRKAIRFRRHDLLTDYYEKGFDLIVCRNVLIYFTAEGKHQAYQKFADSLRRGGVLFIGGSEQILNPADYGLATLNNFFYIKT</sequence>
<protein>
    <recommendedName>
        <fullName>Chemotaxis protein methyltransferase</fullName>
        <ecNumber>2.1.1.80</ecNumber>
    </recommendedName>
</protein>
<evidence type="ECO:0000250" key="1"/>
<evidence type="ECO:0000255" key="2">
    <source>
        <dbReference type="PROSITE-ProRule" id="PRU00051"/>
    </source>
</evidence>
<name>CHER_LISIN</name>
<reference key="1">
    <citation type="journal article" date="2001" name="Science">
        <title>Comparative genomics of Listeria species.</title>
        <authorList>
            <person name="Glaser P."/>
            <person name="Frangeul L."/>
            <person name="Buchrieser C."/>
            <person name="Rusniok C."/>
            <person name="Amend A."/>
            <person name="Baquero F."/>
            <person name="Berche P."/>
            <person name="Bloecker H."/>
            <person name="Brandt P."/>
            <person name="Chakraborty T."/>
            <person name="Charbit A."/>
            <person name="Chetouani F."/>
            <person name="Couve E."/>
            <person name="de Daruvar A."/>
            <person name="Dehoux P."/>
            <person name="Domann E."/>
            <person name="Dominguez-Bernal G."/>
            <person name="Duchaud E."/>
            <person name="Durant L."/>
            <person name="Dussurget O."/>
            <person name="Entian K.-D."/>
            <person name="Fsihi H."/>
            <person name="Garcia-del Portillo F."/>
            <person name="Garrido P."/>
            <person name="Gautier L."/>
            <person name="Goebel W."/>
            <person name="Gomez-Lopez N."/>
            <person name="Hain T."/>
            <person name="Hauf J."/>
            <person name="Jackson D."/>
            <person name="Jones L.-M."/>
            <person name="Kaerst U."/>
            <person name="Kreft J."/>
            <person name="Kuhn M."/>
            <person name="Kunst F."/>
            <person name="Kurapkat G."/>
            <person name="Madueno E."/>
            <person name="Maitournam A."/>
            <person name="Mata Vicente J."/>
            <person name="Ng E."/>
            <person name="Nedjari H."/>
            <person name="Nordsiek G."/>
            <person name="Novella S."/>
            <person name="de Pablos B."/>
            <person name="Perez-Diaz J.-C."/>
            <person name="Purcell R."/>
            <person name="Remmel B."/>
            <person name="Rose M."/>
            <person name="Schlueter T."/>
            <person name="Simoes N."/>
            <person name="Tierrez A."/>
            <person name="Vazquez-Boland J.-A."/>
            <person name="Voss H."/>
            <person name="Wehland J."/>
            <person name="Cossart P."/>
        </authorList>
    </citation>
    <scope>NUCLEOTIDE SEQUENCE [LARGE SCALE GENOMIC DNA]</scope>
    <source>
        <strain>ATCC BAA-680 / CLIP 11262</strain>
    </source>
</reference>
<dbReference type="EC" id="2.1.1.80"/>
<dbReference type="EMBL" id="AL596166">
    <property type="protein sequence ID" value="CAC95923.1"/>
    <property type="molecule type" value="Genomic_DNA"/>
</dbReference>
<dbReference type="PIR" id="AC1519">
    <property type="entry name" value="AC1519"/>
</dbReference>
<dbReference type="RefSeq" id="WP_003760937.1">
    <property type="nucleotide sequence ID" value="NC_003212.1"/>
</dbReference>
<dbReference type="SMR" id="Q92DX0"/>
<dbReference type="STRING" id="272626.gene:17565018"/>
<dbReference type="KEGG" id="lin:lin0691"/>
<dbReference type="eggNOG" id="COG1352">
    <property type="taxonomic scope" value="Bacteria"/>
</dbReference>
<dbReference type="HOGENOM" id="CLU_025854_1_1_9"/>
<dbReference type="OrthoDB" id="9816309at2"/>
<dbReference type="Proteomes" id="UP000002513">
    <property type="component" value="Chromosome"/>
</dbReference>
<dbReference type="GO" id="GO:0008983">
    <property type="term" value="F:protein-glutamate O-methyltransferase activity"/>
    <property type="evidence" value="ECO:0007669"/>
    <property type="project" value="UniProtKB-EC"/>
</dbReference>
<dbReference type="GO" id="GO:0032259">
    <property type="term" value="P:methylation"/>
    <property type="evidence" value="ECO:0007669"/>
    <property type="project" value="UniProtKB-KW"/>
</dbReference>
<dbReference type="Gene3D" id="3.40.50.150">
    <property type="entry name" value="Vaccinia Virus protein VP39"/>
    <property type="match status" value="1"/>
</dbReference>
<dbReference type="InterPro" id="IPR050903">
    <property type="entry name" value="Bact_Chemotaxis_MeTrfase"/>
</dbReference>
<dbReference type="InterPro" id="IPR022642">
    <property type="entry name" value="CheR_C"/>
</dbReference>
<dbReference type="InterPro" id="IPR000780">
    <property type="entry name" value="CheR_MeTrfase"/>
</dbReference>
<dbReference type="InterPro" id="IPR022641">
    <property type="entry name" value="CheR_N"/>
</dbReference>
<dbReference type="InterPro" id="IPR029063">
    <property type="entry name" value="SAM-dependent_MTases_sf"/>
</dbReference>
<dbReference type="PANTHER" id="PTHR24422">
    <property type="entry name" value="CHEMOTAXIS PROTEIN METHYLTRANSFERASE"/>
    <property type="match status" value="1"/>
</dbReference>
<dbReference type="PANTHER" id="PTHR24422:SF19">
    <property type="entry name" value="CHEMOTAXIS PROTEIN METHYLTRANSFERASE"/>
    <property type="match status" value="1"/>
</dbReference>
<dbReference type="Pfam" id="PF01739">
    <property type="entry name" value="CheR"/>
    <property type="match status" value="1"/>
</dbReference>
<dbReference type="Pfam" id="PF03705">
    <property type="entry name" value="CheR_N"/>
    <property type="match status" value="1"/>
</dbReference>
<dbReference type="PRINTS" id="PR00996">
    <property type="entry name" value="CHERMTFRASE"/>
</dbReference>
<dbReference type="SMART" id="SM00138">
    <property type="entry name" value="MeTrc"/>
    <property type="match status" value="1"/>
</dbReference>
<dbReference type="SUPFAM" id="SSF47757">
    <property type="entry name" value="Chemotaxis receptor methyltransferase CheR, N-terminal domain"/>
    <property type="match status" value="1"/>
</dbReference>
<dbReference type="SUPFAM" id="SSF53335">
    <property type="entry name" value="S-adenosyl-L-methionine-dependent methyltransferases"/>
    <property type="match status" value="1"/>
</dbReference>
<dbReference type="PROSITE" id="PS50123">
    <property type="entry name" value="CHER"/>
    <property type="match status" value="1"/>
</dbReference>
<keyword id="KW-0489">Methyltransferase</keyword>
<keyword id="KW-0949">S-adenosyl-L-methionine</keyword>
<keyword id="KW-0808">Transferase</keyword>
<comment type="function">
    <text evidence="1">Methylation of the membrane-bound methyl-accepting chemotaxis proteins (MCP) to form gamma-glutamyl methyl ester residues in MCP.</text>
</comment>
<comment type="catalytic activity">
    <reaction>
        <text>L-glutamyl-[protein] + S-adenosyl-L-methionine = [protein]-L-glutamate 5-O-methyl ester + S-adenosyl-L-homocysteine</text>
        <dbReference type="Rhea" id="RHEA:24452"/>
        <dbReference type="Rhea" id="RHEA-COMP:10208"/>
        <dbReference type="Rhea" id="RHEA-COMP:10311"/>
        <dbReference type="ChEBI" id="CHEBI:29973"/>
        <dbReference type="ChEBI" id="CHEBI:57856"/>
        <dbReference type="ChEBI" id="CHEBI:59789"/>
        <dbReference type="ChEBI" id="CHEBI:82795"/>
        <dbReference type="EC" id="2.1.1.80"/>
    </reaction>
</comment>